<sequence>MLLDDLYEIVEPITADLGYILWGIEVVGSGKLTIRIFIDHENGVSVDDCQIVSKEISAVFDVEDPVSGKYILEVSSPGMNRQIFNIIQAQALVGFNVKAVTLAPVGSQTKFKGVLERVEGNNVILNLEDGKEISFDFDELKKLRVSPDFS</sequence>
<feature type="chain" id="PRO_1000136766" description="Ribosome maturation factor RimP">
    <location>
        <begin position="1"/>
        <end position="150"/>
    </location>
</feature>
<organism>
    <name type="scientific">Francisella tularensis subsp. tularensis (strain WY96-3418)</name>
    <dbReference type="NCBI Taxonomy" id="418136"/>
    <lineage>
        <taxon>Bacteria</taxon>
        <taxon>Pseudomonadati</taxon>
        <taxon>Pseudomonadota</taxon>
        <taxon>Gammaproteobacteria</taxon>
        <taxon>Thiotrichales</taxon>
        <taxon>Francisellaceae</taxon>
        <taxon>Francisella</taxon>
    </lineage>
</organism>
<gene>
    <name evidence="1" type="primary">rimP</name>
    <name type="ordered locus">FTW_0124</name>
</gene>
<evidence type="ECO:0000255" key="1">
    <source>
        <dbReference type="HAMAP-Rule" id="MF_01077"/>
    </source>
</evidence>
<comment type="function">
    <text evidence="1">Required for maturation of 30S ribosomal subunits.</text>
</comment>
<comment type="subcellular location">
    <subcellularLocation>
        <location evidence="1">Cytoplasm</location>
    </subcellularLocation>
</comment>
<comment type="similarity">
    <text evidence="1">Belongs to the RimP family.</text>
</comment>
<dbReference type="EMBL" id="CP000608">
    <property type="protein sequence ID" value="ABO46110.1"/>
    <property type="molecule type" value="Genomic_DNA"/>
</dbReference>
<dbReference type="RefSeq" id="WP_003024580.1">
    <property type="nucleotide sequence ID" value="NC_009257.1"/>
</dbReference>
<dbReference type="SMR" id="A4IW08"/>
<dbReference type="GeneID" id="75264607"/>
<dbReference type="KEGG" id="ftw:FTW_0124"/>
<dbReference type="HOGENOM" id="CLU_070525_1_1_6"/>
<dbReference type="GO" id="GO:0005829">
    <property type="term" value="C:cytosol"/>
    <property type="evidence" value="ECO:0007669"/>
    <property type="project" value="TreeGrafter"/>
</dbReference>
<dbReference type="GO" id="GO:0000028">
    <property type="term" value="P:ribosomal small subunit assembly"/>
    <property type="evidence" value="ECO:0007669"/>
    <property type="project" value="TreeGrafter"/>
</dbReference>
<dbReference type="GO" id="GO:0006412">
    <property type="term" value="P:translation"/>
    <property type="evidence" value="ECO:0007669"/>
    <property type="project" value="TreeGrafter"/>
</dbReference>
<dbReference type="CDD" id="cd01734">
    <property type="entry name" value="YlxS_C"/>
    <property type="match status" value="1"/>
</dbReference>
<dbReference type="FunFam" id="3.30.300.70:FF:000001">
    <property type="entry name" value="Ribosome maturation factor RimP"/>
    <property type="match status" value="1"/>
</dbReference>
<dbReference type="Gene3D" id="2.30.30.180">
    <property type="entry name" value="Ribosome maturation factor RimP, C-terminal domain"/>
    <property type="match status" value="1"/>
</dbReference>
<dbReference type="Gene3D" id="3.30.300.70">
    <property type="entry name" value="RimP-like superfamily, N-terminal"/>
    <property type="match status" value="1"/>
</dbReference>
<dbReference type="HAMAP" id="MF_01077">
    <property type="entry name" value="RimP"/>
    <property type="match status" value="1"/>
</dbReference>
<dbReference type="InterPro" id="IPR003728">
    <property type="entry name" value="Ribosome_maturation_RimP"/>
</dbReference>
<dbReference type="InterPro" id="IPR028998">
    <property type="entry name" value="RimP_C"/>
</dbReference>
<dbReference type="InterPro" id="IPR036847">
    <property type="entry name" value="RimP_C_sf"/>
</dbReference>
<dbReference type="InterPro" id="IPR028989">
    <property type="entry name" value="RimP_N"/>
</dbReference>
<dbReference type="InterPro" id="IPR035956">
    <property type="entry name" value="RimP_N_sf"/>
</dbReference>
<dbReference type="NCBIfam" id="NF011226">
    <property type="entry name" value="PRK14633.1"/>
    <property type="match status" value="1"/>
</dbReference>
<dbReference type="PANTHER" id="PTHR33867">
    <property type="entry name" value="RIBOSOME MATURATION FACTOR RIMP"/>
    <property type="match status" value="1"/>
</dbReference>
<dbReference type="PANTHER" id="PTHR33867:SF1">
    <property type="entry name" value="RIBOSOME MATURATION FACTOR RIMP"/>
    <property type="match status" value="1"/>
</dbReference>
<dbReference type="Pfam" id="PF17384">
    <property type="entry name" value="DUF150_C"/>
    <property type="match status" value="1"/>
</dbReference>
<dbReference type="Pfam" id="PF02576">
    <property type="entry name" value="RimP_N"/>
    <property type="match status" value="1"/>
</dbReference>
<dbReference type="SUPFAM" id="SSF74942">
    <property type="entry name" value="YhbC-like, C-terminal domain"/>
    <property type="match status" value="1"/>
</dbReference>
<dbReference type="SUPFAM" id="SSF75420">
    <property type="entry name" value="YhbC-like, N-terminal domain"/>
    <property type="match status" value="1"/>
</dbReference>
<proteinExistence type="inferred from homology"/>
<protein>
    <recommendedName>
        <fullName evidence="1">Ribosome maturation factor RimP</fullName>
    </recommendedName>
</protein>
<reference key="1">
    <citation type="journal article" date="2007" name="PLoS ONE">
        <title>Complete genomic characterization of a pathogenic A.II strain of Francisella tularensis subspecies tularensis.</title>
        <authorList>
            <person name="Beckstrom-Sternberg S.M."/>
            <person name="Auerbach R.K."/>
            <person name="Godbole S."/>
            <person name="Pearson J.V."/>
            <person name="Beckstrom-Sternberg J.S."/>
            <person name="Deng Z."/>
            <person name="Munk C."/>
            <person name="Kubota K."/>
            <person name="Zhou Y."/>
            <person name="Bruce D."/>
            <person name="Noronha J."/>
            <person name="Scheuermann R.H."/>
            <person name="Wang A."/>
            <person name="Wei X."/>
            <person name="Wang J."/>
            <person name="Hao J."/>
            <person name="Wagner D.M."/>
            <person name="Brettin T.S."/>
            <person name="Brown N."/>
            <person name="Gilna P."/>
            <person name="Keim P.S."/>
        </authorList>
    </citation>
    <scope>NUCLEOTIDE SEQUENCE [LARGE SCALE GENOMIC DNA]</scope>
    <source>
        <strain>WY96-3418</strain>
    </source>
</reference>
<keyword id="KW-0963">Cytoplasm</keyword>
<keyword id="KW-0690">Ribosome biogenesis</keyword>
<accession>A4IW08</accession>
<name>RIMP_FRATW</name>